<proteinExistence type="inferred from homology"/>
<dbReference type="EC" id="1.14.11.64" evidence="1"/>
<dbReference type="EMBL" id="CU928158">
    <property type="protein sequence ID" value="CAQ87974.1"/>
    <property type="molecule type" value="Genomic_DNA"/>
</dbReference>
<dbReference type="RefSeq" id="WP_000993112.1">
    <property type="nucleotide sequence ID" value="NC_011740.1"/>
</dbReference>
<dbReference type="SMR" id="B7LT11"/>
<dbReference type="GeneID" id="75058512"/>
<dbReference type="KEGG" id="efe:EFER_0413"/>
<dbReference type="HOGENOM" id="CLU_075277_0_0_6"/>
<dbReference type="OrthoDB" id="8954293at2"/>
<dbReference type="Proteomes" id="UP000000745">
    <property type="component" value="Chromosome"/>
</dbReference>
<dbReference type="GO" id="GO:0008198">
    <property type="term" value="F:ferrous iron binding"/>
    <property type="evidence" value="ECO:0007669"/>
    <property type="project" value="UniProtKB-UniRule"/>
</dbReference>
<dbReference type="GO" id="GO:0106343">
    <property type="term" value="F:glutarate dioxygenase activity"/>
    <property type="evidence" value="ECO:0007669"/>
    <property type="project" value="UniProtKB-EC"/>
</dbReference>
<dbReference type="GO" id="GO:0050498">
    <property type="term" value="F:oxidoreductase activity, acting on paired donors, with incorporation or reduction of molecular oxygen, with 2-oxoglutarate as one donor, and the other dehydrogenated"/>
    <property type="evidence" value="ECO:0007669"/>
    <property type="project" value="UniProtKB-UniRule"/>
</dbReference>
<dbReference type="GO" id="GO:0019477">
    <property type="term" value="P:L-lysine catabolic process"/>
    <property type="evidence" value="ECO:0007669"/>
    <property type="project" value="UniProtKB-UniRule"/>
</dbReference>
<dbReference type="CDD" id="cd00250">
    <property type="entry name" value="CAS_like"/>
    <property type="match status" value="1"/>
</dbReference>
<dbReference type="FunFam" id="3.60.130.10:FF:000004">
    <property type="entry name" value="Glutarate 2-hydroxylase"/>
    <property type="match status" value="1"/>
</dbReference>
<dbReference type="Gene3D" id="3.60.130.10">
    <property type="entry name" value="Clavaminate synthase-like"/>
    <property type="match status" value="1"/>
</dbReference>
<dbReference type="HAMAP" id="MF_01083">
    <property type="entry name" value="glutarate_hydroxylase"/>
    <property type="match status" value="1"/>
</dbReference>
<dbReference type="InterPro" id="IPR015038">
    <property type="entry name" value="GlaH"/>
</dbReference>
<dbReference type="InterPro" id="IPR042098">
    <property type="entry name" value="TauD-like_sf"/>
</dbReference>
<dbReference type="NCBIfam" id="NF002814">
    <property type="entry name" value="PRK02963.1"/>
    <property type="match status" value="1"/>
</dbReference>
<dbReference type="Pfam" id="PF08943">
    <property type="entry name" value="CsiD"/>
    <property type="match status" value="1"/>
</dbReference>
<dbReference type="SUPFAM" id="SSF51197">
    <property type="entry name" value="Clavaminate synthase-like"/>
    <property type="match status" value="1"/>
</dbReference>
<accession>B7LT11</accession>
<keyword id="KW-0223">Dioxygenase</keyword>
<keyword id="KW-0408">Iron</keyword>
<keyword id="KW-0479">Metal-binding</keyword>
<keyword id="KW-0560">Oxidoreductase</keyword>
<name>GLAH_ESCF3</name>
<feature type="chain" id="PRO_1000136870" description="Glutarate 2-hydroxylase">
    <location>
        <begin position="1"/>
        <end position="325"/>
    </location>
</feature>
<feature type="binding site" evidence="1">
    <location>
        <position position="160"/>
    </location>
    <ligand>
        <name>Fe cation</name>
        <dbReference type="ChEBI" id="CHEBI:24875"/>
    </ligand>
</feature>
<feature type="binding site" evidence="1">
    <location>
        <position position="162"/>
    </location>
    <ligand>
        <name>Fe cation</name>
        <dbReference type="ChEBI" id="CHEBI:24875"/>
    </ligand>
</feature>
<feature type="binding site" evidence="1">
    <location>
        <position position="292"/>
    </location>
    <ligand>
        <name>Fe cation</name>
        <dbReference type="ChEBI" id="CHEBI:24875"/>
    </ligand>
</feature>
<sequence length="325" mass="37349">MNALTAVQNNAVDSGQDYSGFTLIPSAQSPRLLELTFTEQTTKQFLEQVAEWPVQALEYKSFLRFRVGKILDDLCANQLQPLLLKTLLNRAEGALLINAVGVDDVAQADEMVKLATAVAHLIGRSNFDAMSGQYYARFVVKNVDNSDSYLRQPHRVMELHNDGTYVEEITDYVLMMKIDEQNMQGGNSLLLHLDDWEHLEHYFRHPLARRPMRFAAPPSKNVSKDVFHPVFDVDQQGRPVMRYIDQFVQPKDFEEGVWLSELSDAIETSKGILSVPVPVGKFLLINNLFWLHGRDRFTAHPDLRRELMRQRGYFAYATHHYQTHQ</sequence>
<evidence type="ECO:0000255" key="1">
    <source>
        <dbReference type="HAMAP-Rule" id="MF_01083"/>
    </source>
</evidence>
<reference key="1">
    <citation type="journal article" date="2009" name="PLoS Genet.">
        <title>Organised genome dynamics in the Escherichia coli species results in highly diverse adaptive paths.</title>
        <authorList>
            <person name="Touchon M."/>
            <person name="Hoede C."/>
            <person name="Tenaillon O."/>
            <person name="Barbe V."/>
            <person name="Baeriswyl S."/>
            <person name="Bidet P."/>
            <person name="Bingen E."/>
            <person name="Bonacorsi S."/>
            <person name="Bouchier C."/>
            <person name="Bouvet O."/>
            <person name="Calteau A."/>
            <person name="Chiapello H."/>
            <person name="Clermont O."/>
            <person name="Cruveiller S."/>
            <person name="Danchin A."/>
            <person name="Diard M."/>
            <person name="Dossat C."/>
            <person name="Karoui M.E."/>
            <person name="Frapy E."/>
            <person name="Garry L."/>
            <person name="Ghigo J.M."/>
            <person name="Gilles A.M."/>
            <person name="Johnson J."/>
            <person name="Le Bouguenec C."/>
            <person name="Lescat M."/>
            <person name="Mangenot S."/>
            <person name="Martinez-Jehanne V."/>
            <person name="Matic I."/>
            <person name="Nassif X."/>
            <person name="Oztas S."/>
            <person name="Petit M.A."/>
            <person name="Pichon C."/>
            <person name="Rouy Z."/>
            <person name="Ruf C.S."/>
            <person name="Schneider D."/>
            <person name="Tourret J."/>
            <person name="Vacherie B."/>
            <person name="Vallenet D."/>
            <person name="Medigue C."/>
            <person name="Rocha E.P.C."/>
            <person name="Denamur E."/>
        </authorList>
    </citation>
    <scope>NUCLEOTIDE SEQUENCE [LARGE SCALE GENOMIC DNA]</scope>
    <source>
        <strain>ATCC 35469 / DSM 13698 / BCRC 15582 / CCUG 18766 / IAM 14443 / JCM 21226 / LMG 7866 / NBRC 102419 / NCTC 12128 / CDC 0568-73</strain>
    </source>
</reference>
<comment type="function">
    <text evidence="1">Acts as an alpha-ketoglutarate-dependent dioxygenase catalyzing hydroxylation of glutarate (GA) to L-2-hydroxyglutarate (L2HG). Functions in a L-lysine degradation pathway that proceeds via cadaverine, glutarate and L-2-hydroxyglutarate.</text>
</comment>
<comment type="catalytic activity">
    <reaction evidence="1">
        <text>glutarate + 2-oxoglutarate + O2 = (S)-2-hydroxyglutarate + succinate + CO2</text>
        <dbReference type="Rhea" id="RHEA:13821"/>
        <dbReference type="ChEBI" id="CHEBI:15379"/>
        <dbReference type="ChEBI" id="CHEBI:16526"/>
        <dbReference type="ChEBI" id="CHEBI:16782"/>
        <dbReference type="ChEBI" id="CHEBI:16810"/>
        <dbReference type="ChEBI" id="CHEBI:30031"/>
        <dbReference type="ChEBI" id="CHEBI:30921"/>
        <dbReference type="EC" id="1.14.11.64"/>
    </reaction>
    <physiologicalReaction direction="left-to-right" evidence="1">
        <dbReference type="Rhea" id="RHEA:13822"/>
    </physiologicalReaction>
</comment>
<comment type="cofactor">
    <cofactor evidence="1">
        <name>Fe(2+)</name>
        <dbReference type="ChEBI" id="CHEBI:29033"/>
    </cofactor>
    <text evidence="1">Binds 1 Fe(2+) ion per subunit.</text>
</comment>
<comment type="pathway">
    <text evidence="1">Amino-acid degradation.</text>
</comment>
<comment type="subunit">
    <text evidence="1">Homotetramer.</text>
</comment>
<comment type="similarity">
    <text evidence="1">Belongs to the glutarate hydroxylase family.</text>
</comment>
<gene>
    <name evidence="1" type="primary">glaH</name>
    <name type="ordered locus">EFER_0413</name>
</gene>
<organism>
    <name type="scientific">Escherichia fergusonii (strain ATCC 35469 / DSM 13698 / CCUG 18766 / IAM 14443 / JCM 21226 / LMG 7866 / NBRC 102419 / NCTC 12128 / CDC 0568-73)</name>
    <dbReference type="NCBI Taxonomy" id="585054"/>
    <lineage>
        <taxon>Bacteria</taxon>
        <taxon>Pseudomonadati</taxon>
        <taxon>Pseudomonadota</taxon>
        <taxon>Gammaproteobacteria</taxon>
        <taxon>Enterobacterales</taxon>
        <taxon>Enterobacteriaceae</taxon>
        <taxon>Escherichia</taxon>
    </lineage>
</organism>
<protein>
    <recommendedName>
        <fullName evidence="1">Glutarate 2-hydroxylase</fullName>
        <shortName evidence="1">G-2-H</shortName>
        <ecNumber evidence="1">1.14.11.64</ecNumber>
    </recommendedName>
</protein>